<comment type="similarity">
    <text evidence="1">Belongs to the UPF0246 family.</text>
</comment>
<protein>
    <recommendedName>
        <fullName evidence="1">UPF0246 protein Avin_11220</fullName>
    </recommendedName>
</protein>
<organism>
    <name type="scientific">Azotobacter vinelandii (strain DJ / ATCC BAA-1303)</name>
    <dbReference type="NCBI Taxonomy" id="322710"/>
    <lineage>
        <taxon>Bacteria</taxon>
        <taxon>Pseudomonadati</taxon>
        <taxon>Pseudomonadota</taxon>
        <taxon>Gammaproteobacteria</taxon>
        <taxon>Pseudomonadales</taxon>
        <taxon>Pseudomonadaceae</taxon>
        <taxon>Azotobacter</taxon>
    </lineage>
</organism>
<sequence length="259" mass="29829">MLMVISPAKTLDYRTPPVTARHTLPRYLDHAAELMVRLRELTPQAIAELMSLSDKLAGLNAARYAEWTPDFTPANAKQALLAFKGDVYTGLDAEDFDEADFDFAQAHLRMLSGLYGVLRPLDLMQPYRLEMGTKLANARGKDLYAFWGERISLWLNEALAEQGDDILLNLASNEYFSAVRRPLLRGRVIDTEFRDLKNDQYKIVSFYAKQARGRMARYVIKERLRDPEGLKDFDERGYRFSISHSTPERLVFLRDRPMD</sequence>
<accession>C1DPC0</accession>
<reference key="1">
    <citation type="journal article" date="2009" name="J. Bacteriol.">
        <title>Genome sequence of Azotobacter vinelandii, an obligate aerobe specialized to support diverse anaerobic metabolic processes.</title>
        <authorList>
            <person name="Setubal J.C."/>
            <person name="Dos Santos P."/>
            <person name="Goldman B.S."/>
            <person name="Ertesvaag H."/>
            <person name="Espin G."/>
            <person name="Rubio L.M."/>
            <person name="Valla S."/>
            <person name="Almeida N.F."/>
            <person name="Balasubramanian D."/>
            <person name="Cromes L."/>
            <person name="Curatti L."/>
            <person name="Du Z."/>
            <person name="Godsy E."/>
            <person name="Goodner B."/>
            <person name="Hellner-Burris K."/>
            <person name="Hernandez J.A."/>
            <person name="Houmiel K."/>
            <person name="Imperial J."/>
            <person name="Kennedy C."/>
            <person name="Larson T.J."/>
            <person name="Latreille P."/>
            <person name="Ligon L.S."/>
            <person name="Lu J."/>
            <person name="Maerk M."/>
            <person name="Miller N.M."/>
            <person name="Norton S."/>
            <person name="O'Carroll I.P."/>
            <person name="Paulsen I."/>
            <person name="Raulfs E.C."/>
            <person name="Roemer R."/>
            <person name="Rosser J."/>
            <person name="Segura D."/>
            <person name="Slater S."/>
            <person name="Stricklin S.L."/>
            <person name="Studholme D.J."/>
            <person name="Sun J."/>
            <person name="Viana C.J."/>
            <person name="Wallin E."/>
            <person name="Wang B."/>
            <person name="Wheeler C."/>
            <person name="Zhu H."/>
            <person name="Dean D.R."/>
            <person name="Dixon R."/>
            <person name="Wood D."/>
        </authorList>
    </citation>
    <scope>NUCLEOTIDE SEQUENCE [LARGE SCALE GENOMIC DNA]</scope>
    <source>
        <strain>DJ / ATCC BAA-1303</strain>
    </source>
</reference>
<name>Y1122_AZOVD</name>
<proteinExistence type="inferred from homology"/>
<dbReference type="EMBL" id="CP001157">
    <property type="protein sequence ID" value="ACO77352.1"/>
    <property type="molecule type" value="Genomic_DNA"/>
</dbReference>
<dbReference type="RefSeq" id="WP_012699773.1">
    <property type="nucleotide sequence ID" value="NC_012560.1"/>
</dbReference>
<dbReference type="SMR" id="C1DPC0"/>
<dbReference type="STRING" id="322710.Avin_11220"/>
<dbReference type="EnsemblBacteria" id="ACO77352">
    <property type="protein sequence ID" value="ACO77352"/>
    <property type="gene ID" value="Avin_11220"/>
</dbReference>
<dbReference type="GeneID" id="88184457"/>
<dbReference type="KEGG" id="avn:Avin_11220"/>
<dbReference type="eggNOG" id="COG3022">
    <property type="taxonomic scope" value="Bacteria"/>
</dbReference>
<dbReference type="HOGENOM" id="CLU_061989_0_0_6"/>
<dbReference type="OrthoDB" id="9777133at2"/>
<dbReference type="Proteomes" id="UP000002424">
    <property type="component" value="Chromosome"/>
</dbReference>
<dbReference type="GO" id="GO:0005829">
    <property type="term" value="C:cytosol"/>
    <property type="evidence" value="ECO:0007669"/>
    <property type="project" value="TreeGrafter"/>
</dbReference>
<dbReference type="GO" id="GO:0033194">
    <property type="term" value="P:response to hydroperoxide"/>
    <property type="evidence" value="ECO:0007669"/>
    <property type="project" value="TreeGrafter"/>
</dbReference>
<dbReference type="HAMAP" id="MF_00652">
    <property type="entry name" value="UPF0246"/>
    <property type="match status" value="1"/>
</dbReference>
<dbReference type="InterPro" id="IPR005583">
    <property type="entry name" value="YaaA"/>
</dbReference>
<dbReference type="NCBIfam" id="NF002541">
    <property type="entry name" value="PRK02101.1-1"/>
    <property type="match status" value="1"/>
</dbReference>
<dbReference type="NCBIfam" id="NF002542">
    <property type="entry name" value="PRK02101.1-3"/>
    <property type="match status" value="1"/>
</dbReference>
<dbReference type="PANTHER" id="PTHR30283:SF4">
    <property type="entry name" value="PEROXIDE STRESS RESISTANCE PROTEIN YAAA"/>
    <property type="match status" value="1"/>
</dbReference>
<dbReference type="PANTHER" id="PTHR30283">
    <property type="entry name" value="PEROXIDE STRESS RESPONSE PROTEIN YAAA"/>
    <property type="match status" value="1"/>
</dbReference>
<dbReference type="Pfam" id="PF03883">
    <property type="entry name" value="H2O2_YaaD"/>
    <property type="match status" value="1"/>
</dbReference>
<feature type="chain" id="PRO_1000212422" description="UPF0246 protein Avin_11220">
    <location>
        <begin position="1"/>
        <end position="259"/>
    </location>
</feature>
<gene>
    <name type="ordered locus">Avin_11220</name>
</gene>
<evidence type="ECO:0000255" key="1">
    <source>
        <dbReference type="HAMAP-Rule" id="MF_00652"/>
    </source>
</evidence>